<gene>
    <name evidence="1" type="primary">hypA</name>
    <name type="synonym">hupA</name>
    <name type="ordered locus">alr0699</name>
</gene>
<protein>
    <recommendedName>
        <fullName evidence="1">Hydrogenase maturation factor HypA</fullName>
    </recommendedName>
</protein>
<feature type="chain" id="PRO_0000129031" description="Hydrogenase maturation factor HypA">
    <location>
        <begin position="1"/>
        <end position="113"/>
    </location>
</feature>
<feature type="binding site" evidence="1">
    <location>
        <position position="2"/>
    </location>
    <ligand>
        <name>Ni(2+)</name>
        <dbReference type="ChEBI" id="CHEBI:49786"/>
    </ligand>
</feature>
<feature type="binding site" evidence="1">
    <location>
        <position position="70"/>
    </location>
    <ligand>
        <name>Zn(2+)</name>
        <dbReference type="ChEBI" id="CHEBI:29105"/>
    </ligand>
</feature>
<feature type="binding site" evidence="1">
    <location>
        <position position="73"/>
    </location>
    <ligand>
        <name>Zn(2+)</name>
        <dbReference type="ChEBI" id="CHEBI:29105"/>
    </ligand>
</feature>
<feature type="binding site" evidence="1">
    <location>
        <position position="86"/>
    </location>
    <ligand>
        <name>Zn(2+)</name>
        <dbReference type="ChEBI" id="CHEBI:29105"/>
    </ligand>
</feature>
<feature type="binding site" evidence="1">
    <location>
        <position position="88"/>
    </location>
    <ligand>
        <name>Zn(2+)</name>
        <dbReference type="ChEBI" id="CHEBI:29105"/>
    </ligand>
</feature>
<reference key="1">
    <citation type="journal article" date="1996" name="J. Microbiol. Methods">
        <title>The use of a PCR cloning and screening strategy to identify lambda clones containing the hupB gene of Anabaena sp. strain PCC7120.</title>
        <authorList>
            <person name="Gubili J."/>
            <person name="Borthakur D."/>
        </authorList>
    </citation>
    <scope>NUCLEOTIDE SEQUENCE [GENOMIC DNA]</scope>
</reference>
<reference key="2">
    <citation type="submission" date="1997-06" db="EMBL/GenBank/DDBJ databases">
        <authorList>
            <person name="Gubili J."/>
            <person name="Borthakur D."/>
        </authorList>
    </citation>
    <scope>NUCLEOTIDE SEQUENCE [GENOMIC DNA]</scope>
</reference>
<reference key="3">
    <citation type="journal article" date="2001" name="DNA Res.">
        <title>Complete genomic sequence of the filamentous nitrogen-fixing cyanobacterium Anabaena sp. strain PCC 7120.</title>
        <authorList>
            <person name="Kaneko T."/>
            <person name="Nakamura Y."/>
            <person name="Wolk C.P."/>
            <person name="Kuritz T."/>
            <person name="Sasamoto S."/>
            <person name="Watanabe A."/>
            <person name="Iriguchi M."/>
            <person name="Ishikawa A."/>
            <person name="Kawashima K."/>
            <person name="Kimura T."/>
            <person name="Kishida Y."/>
            <person name="Kohara M."/>
            <person name="Matsumoto M."/>
            <person name="Matsuno A."/>
            <person name="Muraki A."/>
            <person name="Nakazaki N."/>
            <person name="Shimpo S."/>
            <person name="Sugimoto M."/>
            <person name="Takazawa M."/>
            <person name="Yamada M."/>
            <person name="Yasuda M."/>
            <person name="Tabata S."/>
        </authorList>
    </citation>
    <scope>NUCLEOTIDE SEQUENCE [LARGE SCALE GENOMIC DNA]</scope>
    <source>
        <strain>PCC 7120 / SAG 25.82 / UTEX 2576</strain>
    </source>
</reference>
<proteinExistence type="inferred from homology"/>
<comment type="function">
    <text evidence="1">Involved in the maturation of [NiFe] hydrogenases. Required for nickel insertion into the metal center of the hydrogenase.</text>
</comment>
<comment type="similarity">
    <text evidence="1">Belongs to the HypA/HybF family.</text>
</comment>
<evidence type="ECO:0000255" key="1">
    <source>
        <dbReference type="HAMAP-Rule" id="MF_00213"/>
    </source>
</evidence>
<sequence length="113" mass="12161">MHELGITQNIVAIVSEYAQGSKVNRILLEIGKLSAIMPDAVQFCFDICSKGTSLEGAVLEIREIPGLAKCRQCGAEIALEKPFGICGCGSVHLDVITGEELKIKEIEVEEVCV</sequence>
<organism>
    <name type="scientific">Nostoc sp. (strain PCC 7120 / SAG 25.82 / UTEX 2576)</name>
    <dbReference type="NCBI Taxonomy" id="103690"/>
    <lineage>
        <taxon>Bacteria</taxon>
        <taxon>Bacillati</taxon>
        <taxon>Cyanobacteriota</taxon>
        <taxon>Cyanophyceae</taxon>
        <taxon>Nostocales</taxon>
        <taxon>Nostocaceae</taxon>
        <taxon>Nostoc</taxon>
    </lineage>
</organism>
<name>HYPA_NOSS1</name>
<keyword id="KW-0479">Metal-binding</keyword>
<keyword id="KW-0533">Nickel</keyword>
<keyword id="KW-1185">Reference proteome</keyword>
<keyword id="KW-0862">Zinc</keyword>
<dbReference type="EMBL" id="AF006594">
    <property type="protein sequence ID" value="AAB64437.1"/>
    <property type="molecule type" value="Genomic_DNA"/>
</dbReference>
<dbReference type="EMBL" id="BA000019">
    <property type="protein sequence ID" value="BAB72656.1"/>
    <property type="molecule type" value="Genomic_DNA"/>
</dbReference>
<dbReference type="PIR" id="AI1893">
    <property type="entry name" value="AI1893"/>
</dbReference>
<dbReference type="RefSeq" id="WP_010994874.1">
    <property type="nucleotide sequence ID" value="NZ_RSCN01000009.1"/>
</dbReference>
<dbReference type="SMR" id="O30461"/>
<dbReference type="STRING" id="103690.gene:10492709"/>
<dbReference type="KEGG" id="ana:alr0699"/>
<dbReference type="eggNOG" id="COG0375">
    <property type="taxonomic scope" value="Bacteria"/>
</dbReference>
<dbReference type="OrthoDB" id="9800361at2"/>
<dbReference type="Proteomes" id="UP000002483">
    <property type="component" value="Chromosome"/>
</dbReference>
<dbReference type="GO" id="GO:0016151">
    <property type="term" value="F:nickel cation binding"/>
    <property type="evidence" value="ECO:0007669"/>
    <property type="project" value="UniProtKB-UniRule"/>
</dbReference>
<dbReference type="GO" id="GO:0008270">
    <property type="term" value="F:zinc ion binding"/>
    <property type="evidence" value="ECO:0007669"/>
    <property type="project" value="UniProtKB-UniRule"/>
</dbReference>
<dbReference type="GO" id="GO:0051604">
    <property type="term" value="P:protein maturation"/>
    <property type="evidence" value="ECO:0007669"/>
    <property type="project" value="InterPro"/>
</dbReference>
<dbReference type="GO" id="GO:0036211">
    <property type="term" value="P:protein modification process"/>
    <property type="evidence" value="ECO:0007669"/>
    <property type="project" value="UniProtKB-UniRule"/>
</dbReference>
<dbReference type="Gene3D" id="3.30.2320.80">
    <property type="match status" value="1"/>
</dbReference>
<dbReference type="HAMAP" id="MF_00213">
    <property type="entry name" value="HypA_HybF"/>
    <property type="match status" value="1"/>
</dbReference>
<dbReference type="InterPro" id="IPR020538">
    <property type="entry name" value="Hydgase_Ni_incorp_HypA/HybF_CS"/>
</dbReference>
<dbReference type="InterPro" id="IPR000688">
    <property type="entry name" value="HypA/HybF"/>
</dbReference>
<dbReference type="PANTHER" id="PTHR34535">
    <property type="entry name" value="HYDROGENASE MATURATION FACTOR HYPA"/>
    <property type="match status" value="1"/>
</dbReference>
<dbReference type="PANTHER" id="PTHR34535:SF3">
    <property type="entry name" value="HYDROGENASE MATURATION FACTOR HYPA"/>
    <property type="match status" value="1"/>
</dbReference>
<dbReference type="Pfam" id="PF01155">
    <property type="entry name" value="HypA"/>
    <property type="match status" value="1"/>
</dbReference>
<dbReference type="PIRSF" id="PIRSF004761">
    <property type="entry name" value="Hydrgn_mat_HypA"/>
    <property type="match status" value="1"/>
</dbReference>
<dbReference type="PROSITE" id="PS01249">
    <property type="entry name" value="HYPA"/>
    <property type="match status" value="1"/>
</dbReference>
<accession>O30461</accession>